<accession>P0CAM9</accession>
<protein>
    <recommendedName>
        <fullName>Uncharacterized protein DP238L</fullName>
    </recommendedName>
</protein>
<evidence type="ECO:0000256" key="1">
    <source>
        <dbReference type="SAM" id="MobiDB-lite"/>
    </source>
</evidence>
<evidence type="ECO:0000305" key="2"/>
<keyword id="KW-0244">Early protein</keyword>
<sequence length="233" mass="26733">MAHGRNIRKRTFSDMDTLSDKNIGIHTNSLPKNLLCRRILFKGKISKYSIFNDSLAKDHSSNRSMSIDGLIGKKRPHDISFQNMNSSMPSSTQKKTRILDEEIKDQSSSNENDRDSPVIVTLKPSYMPKTSRITEIIHKMKELNMNRIEDGLSFNKKRSEHDAKNVLLHTMEMEEDCEIEEDIAIDSPYLNTSLSEDDTESIVETDYSEEEKESISETESSSDDESYSLYDSF</sequence>
<gene>
    <name type="ordered locus">Pret-159</name>
</gene>
<organismHost>
    <name type="scientific">Ornithodoros</name>
    <name type="common">relapsing fever ticks</name>
    <dbReference type="NCBI Taxonomy" id="6937"/>
</organismHost>
<organismHost>
    <name type="scientific">Phacochoerus aethiopicus</name>
    <name type="common">Warthog</name>
    <dbReference type="NCBI Taxonomy" id="85517"/>
</organismHost>
<organismHost>
    <name type="scientific">Phacochoerus africanus</name>
    <name type="common">Warthog</name>
    <dbReference type="NCBI Taxonomy" id="41426"/>
</organismHost>
<organismHost>
    <name type="scientific">Potamochoerus larvatus</name>
    <name type="common">Bushpig</name>
    <dbReference type="NCBI Taxonomy" id="273792"/>
</organismHost>
<organismHost>
    <name type="scientific">Sus scrofa</name>
    <name type="common">Pig</name>
    <dbReference type="NCBI Taxonomy" id="9823"/>
</organismHost>
<feature type="chain" id="PRO_0000373764" description="Uncharacterized protein DP238L">
    <location>
        <begin position="1"/>
        <end position="233"/>
    </location>
</feature>
<feature type="region of interest" description="Disordered" evidence="1">
    <location>
        <begin position="190"/>
        <end position="233"/>
    </location>
</feature>
<feature type="compositionally biased region" description="Acidic residues" evidence="1">
    <location>
        <begin position="195"/>
        <end position="212"/>
    </location>
</feature>
<comment type="induction">
    <text evidence="2">Expressed in the early phase of the viral replicative cycle.</text>
</comment>
<comment type="similarity">
    <text evidence="2">Belongs to the asfivirus DP238L family.</text>
</comment>
<proteinExistence type="inferred from homology"/>
<reference key="1">
    <citation type="submission" date="2003-03" db="EMBL/GenBank/DDBJ databases">
        <title>African swine fever virus genomes.</title>
        <authorList>
            <person name="Kutish G.F."/>
            <person name="Rock D.L."/>
        </authorList>
    </citation>
    <scope>NUCLEOTIDE SEQUENCE [LARGE SCALE GENOMIC DNA]</scope>
</reference>
<name>VFD38_ASFP4</name>
<dbReference type="EMBL" id="AY261363">
    <property type="status" value="NOT_ANNOTATED_CDS"/>
    <property type="molecule type" value="Genomic_DNA"/>
</dbReference>
<dbReference type="Proteomes" id="UP000000859">
    <property type="component" value="Segment"/>
</dbReference>
<organism>
    <name type="scientific">African swine fever virus (isolate Tick/South Africa/Pretoriuskop Pr4/1996)</name>
    <name type="common">ASFV</name>
    <dbReference type="NCBI Taxonomy" id="561443"/>
    <lineage>
        <taxon>Viruses</taxon>
        <taxon>Varidnaviria</taxon>
        <taxon>Bamfordvirae</taxon>
        <taxon>Nucleocytoviricota</taxon>
        <taxon>Pokkesviricetes</taxon>
        <taxon>Asfuvirales</taxon>
        <taxon>Asfarviridae</taxon>
        <taxon>Asfivirus</taxon>
        <taxon>African swine fever virus</taxon>
    </lineage>
</organism>